<sequence length="28" mass="3320">HSDAVFTDNYSRFRKQMAVKKYLNSVLT</sequence>
<evidence type="ECO:0000250" key="1">
    <source>
        <dbReference type="UniProtKB" id="P01282"/>
    </source>
</evidence>
<evidence type="ECO:0000250" key="2">
    <source>
        <dbReference type="UniProtKB" id="P48143"/>
    </source>
</evidence>
<evidence type="ECO:0000305" key="3"/>
<feature type="peptide" id="PRO_0000043945" description="Vasoactive intestinal peptide">
    <location>
        <begin position="1"/>
        <end position="28"/>
    </location>
</feature>
<feature type="modified residue" description="Threonine amide" evidence="2">
    <location>
        <position position="28"/>
    </location>
</feature>
<accession>P81016</accession>
<reference key="1">
    <citation type="journal article" date="1995" name="Endocrinology">
        <title>Frog vasoactive intestinal polypeptide and galanin: primary structures and effects on pituitary adenylate cyclase.</title>
        <authorList>
            <person name="Chartrel N."/>
            <person name="Wang Y."/>
            <person name="Fournier A."/>
            <person name="Vaudry H."/>
            <person name="Conlon J.M."/>
        </authorList>
    </citation>
    <scope>PROTEIN SEQUENCE</scope>
</reference>
<gene>
    <name type="primary">vip</name>
</gene>
<keyword id="KW-0027">Amidation</keyword>
<keyword id="KW-0903">Direct protein sequencing</keyword>
<keyword id="KW-0372">Hormone</keyword>
<keyword id="KW-0964">Secreted</keyword>
<name>VIP_PELRI</name>
<organism>
    <name type="scientific">Pelophylax ridibundus</name>
    <name type="common">Marsh frog</name>
    <name type="synonym">Rana ridibunda</name>
    <dbReference type="NCBI Taxonomy" id="8406"/>
    <lineage>
        <taxon>Eukaryota</taxon>
        <taxon>Metazoa</taxon>
        <taxon>Chordata</taxon>
        <taxon>Craniata</taxon>
        <taxon>Vertebrata</taxon>
        <taxon>Euteleostomi</taxon>
        <taxon>Amphibia</taxon>
        <taxon>Batrachia</taxon>
        <taxon>Anura</taxon>
        <taxon>Neobatrachia</taxon>
        <taxon>Ranoidea</taxon>
        <taxon>Ranidae</taxon>
        <taxon>Pelophylax</taxon>
    </lineage>
</organism>
<proteinExistence type="evidence at protein level"/>
<protein>
    <recommendedName>
        <fullName>Vasoactive intestinal peptide</fullName>
        <shortName>VIP</shortName>
    </recommendedName>
    <alternativeName>
        <fullName>Vasoactive intestinal polypeptide</fullName>
    </alternativeName>
</protein>
<dbReference type="SMR" id="P81016"/>
<dbReference type="GO" id="GO:0005576">
    <property type="term" value="C:extracellular region"/>
    <property type="evidence" value="ECO:0007669"/>
    <property type="project" value="UniProtKB-SubCell"/>
</dbReference>
<dbReference type="GO" id="GO:0043005">
    <property type="term" value="C:neuron projection"/>
    <property type="evidence" value="ECO:0007669"/>
    <property type="project" value="TreeGrafter"/>
</dbReference>
<dbReference type="GO" id="GO:0005184">
    <property type="term" value="F:neuropeptide hormone activity"/>
    <property type="evidence" value="ECO:0000250"/>
    <property type="project" value="UniProtKB"/>
</dbReference>
<dbReference type="GO" id="GO:0051428">
    <property type="term" value="F:peptide hormone receptor binding"/>
    <property type="evidence" value="ECO:0007669"/>
    <property type="project" value="TreeGrafter"/>
</dbReference>
<dbReference type="GO" id="GO:0031891">
    <property type="term" value="F:type 1 vasoactive intestinal polypeptide receptor binding"/>
    <property type="evidence" value="ECO:0000250"/>
    <property type="project" value="UniProtKB"/>
</dbReference>
<dbReference type="GO" id="GO:0007189">
    <property type="term" value="P:adenylate cyclase-activating G protein-coupled receptor signaling pathway"/>
    <property type="evidence" value="ECO:0000250"/>
    <property type="project" value="UniProtKB"/>
</dbReference>
<dbReference type="GO" id="GO:0048242">
    <property type="term" value="P:epinephrine secretion"/>
    <property type="evidence" value="ECO:0007669"/>
    <property type="project" value="TreeGrafter"/>
</dbReference>
<dbReference type="GO" id="GO:0048255">
    <property type="term" value="P:mRNA stabilization"/>
    <property type="evidence" value="ECO:0000250"/>
    <property type="project" value="AgBase"/>
</dbReference>
<dbReference type="GO" id="GO:0070459">
    <property type="term" value="P:prolactin secretion"/>
    <property type="evidence" value="ECO:0000250"/>
    <property type="project" value="AgBase"/>
</dbReference>
<dbReference type="GO" id="GO:0032880">
    <property type="term" value="P:regulation of protein localization"/>
    <property type="evidence" value="ECO:0007669"/>
    <property type="project" value="TreeGrafter"/>
</dbReference>
<dbReference type="Gene3D" id="6.10.250.590">
    <property type="match status" value="1"/>
</dbReference>
<dbReference type="InterPro" id="IPR000532">
    <property type="entry name" value="Glucagon_GIP_secretin_VIP"/>
</dbReference>
<dbReference type="InterPro" id="IPR046963">
    <property type="entry name" value="VIP/GHRH-like"/>
</dbReference>
<dbReference type="PANTHER" id="PTHR11213">
    <property type="entry name" value="GLUCAGON-FAMILY NEUROPEPTIDE"/>
    <property type="match status" value="1"/>
</dbReference>
<dbReference type="PANTHER" id="PTHR11213:SF5">
    <property type="entry name" value="VIP PEPTIDES"/>
    <property type="match status" value="1"/>
</dbReference>
<dbReference type="Pfam" id="PF00123">
    <property type="entry name" value="Hormone_2"/>
    <property type="match status" value="1"/>
</dbReference>
<dbReference type="PRINTS" id="PR00275">
    <property type="entry name" value="GLUCAGON"/>
</dbReference>
<dbReference type="SMART" id="SM00070">
    <property type="entry name" value="GLUCA"/>
    <property type="match status" value="1"/>
</dbReference>
<dbReference type="PROSITE" id="PS00260">
    <property type="entry name" value="GLUCAGON"/>
    <property type="match status" value="1"/>
</dbReference>
<comment type="function">
    <molecule>Vasoactive intestinal peptide</molecule>
    <text evidence="1">VIP is a neuropeptide involved in a diverse array of physiological processes through activating the PACAP subfamily of class B1 G protein-coupled receptors: VIP receptor 1 (VPR1) and VIP receptor 2 (VPR2). Abundantly expressed throughout the CNS and peripheral nervous systems where they primarily exert neuroprotective and immune modulatory roles. Also causes vasodilation, lowers arterial blood pressure, stimulates myocardial contractility, increases glycogenolysis and relaxes the smooth muscle of trachea, stomach and gall bladder.</text>
</comment>
<comment type="subcellular location">
    <subcellularLocation>
        <location>Secreted</location>
    </subcellularLocation>
</comment>
<comment type="similarity">
    <text evidence="3">Belongs to the glucagon family.</text>
</comment>